<evidence type="ECO:0000255" key="1">
    <source>
        <dbReference type="HAMAP-Rule" id="MF_00652"/>
    </source>
</evidence>
<comment type="similarity">
    <text evidence="1">Belongs to the UPF0246 family.</text>
</comment>
<dbReference type="EMBL" id="CP001103">
    <property type="protein sequence ID" value="AEA99219.1"/>
    <property type="molecule type" value="Genomic_DNA"/>
</dbReference>
<dbReference type="SMR" id="B4RX37"/>
<dbReference type="KEGG" id="amc:MADE_1015435"/>
<dbReference type="HOGENOM" id="CLU_061989_0_0_6"/>
<dbReference type="Proteomes" id="UP000001870">
    <property type="component" value="Chromosome"/>
</dbReference>
<dbReference type="GO" id="GO:0005829">
    <property type="term" value="C:cytosol"/>
    <property type="evidence" value="ECO:0007669"/>
    <property type="project" value="TreeGrafter"/>
</dbReference>
<dbReference type="GO" id="GO:0033194">
    <property type="term" value="P:response to hydroperoxide"/>
    <property type="evidence" value="ECO:0007669"/>
    <property type="project" value="TreeGrafter"/>
</dbReference>
<dbReference type="HAMAP" id="MF_00652">
    <property type="entry name" value="UPF0246"/>
    <property type="match status" value="1"/>
</dbReference>
<dbReference type="InterPro" id="IPR005583">
    <property type="entry name" value="YaaA"/>
</dbReference>
<dbReference type="NCBIfam" id="NF002541">
    <property type="entry name" value="PRK02101.1-1"/>
    <property type="match status" value="1"/>
</dbReference>
<dbReference type="NCBIfam" id="NF002542">
    <property type="entry name" value="PRK02101.1-3"/>
    <property type="match status" value="1"/>
</dbReference>
<dbReference type="PANTHER" id="PTHR30283:SF4">
    <property type="entry name" value="PEROXIDE STRESS RESISTANCE PROTEIN YAAA"/>
    <property type="match status" value="1"/>
</dbReference>
<dbReference type="PANTHER" id="PTHR30283">
    <property type="entry name" value="PEROXIDE STRESS RESPONSE PROTEIN YAAA"/>
    <property type="match status" value="1"/>
</dbReference>
<dbReference type="Pfam" id="PF03883">
    <property type="entry name" value="H2O2_YaaD"/>
    <property type="match status" value="1"/>
</dbReference>
<sequence>MLVVVSPAKNLDFESDIPVKQFTQPAMLEDTEKLMEVCRTLSPADLSSLMKISDKLATLNANRFAEFTTPFTPDNARQAMYAFNGDVYTGLDAYSLDSDTVAYAQKHLRILSGLYGLLRPLDLMQAYRLEMGTKLANPEGKDLYAFWDDRITYVLNKALEAQGDNVLINLASNEYFKAVKKKSLDGMIITPTFKDCKNGQYKIISFFAKKARGLMARYILENRVEDVEGLKNFDVDGYVFSEEQSSSTELVYLRNQESE</sequence>
<name>Y3318_ALTMD</name>
<reference key="1">
    <citation type="journal article" date="2008" name="ISME J.">
        <title>Comparative genomics of two ecotypes of the marine planktonic copiotroph Alteromonas macleodii suggests alternative lifestyles associated with different kinds of particulate organic matter.</title>
        <authorList>
            <person name="Ivars-Martinez E."/>
            <person name="Martin-Cuadrado A.-B."/>
            <person name="D'Auria G."/>
            <person name="Mira A."/>
            <person name="Ferriera S."/>
            <person name="Johnson J."/>
            <person name="Friedman R."/>
            <person name="Rodriguez-Valera F."/>
        </authorList>
    </citation>
    <scope>NUCLEOTIDE SEQUENCE [LARGE SCALE GENOMIC DNA]</scope>
    <source>
        <strain>DSM 17117 / CIP 110805 / LMG 28347 / Deep ecotype</strain>
    </source>
</reference>
<accession>B4RX37</accession>
<accession>F2GD83</accession>
<gene>
    <name type="ordered locus">MADE_1015435</name>
</gene>
<feature type="chain" id="PRO_1000131099" description="UPF0246 protein MADE_1015435">
    <location>
        <begin position="1"/>
        <end position="259"/>
    </location>
</feature>
<protein>
    <recommendedName>
        <fullName evidence="1">UPF0246 protein MADE_1015435</fullName>
    </recommendedName>
</protein>
<proteinExistence type="inferred from homology"/>
<organism>
    <name type="scientific">Alteromonas mediterranea (strain DSM 17117 / CIP 110805 / LMG 28347 / Deep ecotype)</name>
    <dbReference type="NCBI Taxonomy" id="1774373"/>
    <lineage>
        <taxon>Bacteria</taxon>
        <taxon>Pseudomonadati</taxon>
        <taxon>Pseudomonadota</taxon>
        <taxon>Gammaproteobacteria</taxon>
        <taxon>Alteromonadales</taxon>
        <taxon>Alteromonadaceae</taxon>
        <taxon>Alteromonas/Salinimonas group</taxon>
        <taxon>Alteromonas</taxon>
    </lineage>
</organism>